<dbReference type="EC" id="6.3.4.21" evidence="1"/>
<dbReference type="EMBL" id="AE005674">
    <property type="protein sequence ID" value="AAN42557.2"/>
    <property type="molecule type" value="Genomic_DNA"/>
</dbReference>
<dbReference type="EMBL" id="AE014073">
    <property type="protein sequence ID" value="AAP16443.1"/>
    <property type="molecule type" value="Genomic_DNA"/>
</dbReference>
<dbReference type="RefSeq" id="NP_706850.2">
    <property type="nucleotide sequence ID" value="NC_004337.2"/>
</dbReference>
<dbReference type="RefSeq" id="WP_001297200.1">
    <property type="nucleotide sequence ID" value="NZ_WPGW01000157.1"/>
</dbReference>
<dbReference type="SMR" id="Q83LN3"/>
<dbReference type="STRING" id="198214.SF0928"/>
<dbReference type="PaxDb" id="198214-SF0928"/>
<dbReference type="GeneID" id="1023900"/>
<dbReference type="GeneID" id="93776483"/>
<dbReference type="KEGG" id="sfl:SF0928"/>
<dbReference type="KEGG" id="sfx:S0992"/>
<dbReference type="PATRIC" id="fig|198214.7.peg.1080"/>
<dbReference type="HOGENOM" id="CLU_030991_1_0_6"/>
<dbReference type="UniPathway" id="UPA00253">
    <property type="reaction ID" value="UER00457"/>
</dbReference>
<dbReference type="Proteomes" id="UP000001006">
    <property type="component" value="Chromosome"/>
</dbReference>
<dbReference type="Proteomes" id="UP000002673">
    <property type="component" value="Chromosome"/>
</dbReference>
<dbReference type="GO" id="GO:0005829">
    <property type="term" value="C:cytosol"/>
    <property type="evidence" value="ECO:0007669"/>
    <property type="project" value="TreeGrafter"/>
</dbReference>
<dbReference type="GO" id="GO:0004516">
    <property type="term" value="F:nicotinate phosphoribosyltransferase activity"/>
    <property type="evidence" value="ECO:0007669"/>
    <property type="project" value="UniProtKB-UniRule"/>
</dbReference>
<dbReference type="GO" id="GO:0034355">
    <property type="term" value="P:NAD biosynthetic process via the salvage pathway"/>
    <property type="evidence" value="ECO:0007669"/>
    <property type="project" value="TreeGrafter"/>
</dbReference>
<dbReference type="CDD" id="cd01401">
    <property type="entry name" value="PncB_like"/>
    <property type="match status" value="1"/>
</dbReference>
<dbReference type="FunFam" id="3.20.140.10:FF:000001">
    <property type="entry name" value="Nicotinate phosphoribosyltransferase"/>
    <property type="match status" value="1"/>
</dbReference>
<dbReference type="Gene3D" id="3.20.140.10">
    <property type="entry name" value="nicotinate phosphoribosyltransferase"/>
    <property type="match status" value="1"/>
</dbReference>
<dbReference type="HAMAP" id="MF_00570">
    <property type="entry name" value="NAPRTase"/>
    <property type="match status" value="1"/>
</dbReference>
<dbReference type="InterPro" id="IPR041525">
    <property type="entry name" value="N/Namide_PRibTrfase"/>
</dbReference>
<dbReference type="InterPro" id="IPR040727">
    <property type="entry name" value="NAPRTase_N"/>
</dbReference>
<dbReference type="InterPro" id="IPR006406">
    <property type="entry name" value="Nic_PRibTrfase"/>
</dbReference>
<dbReference type="InterPro" id="IPR007229">
    <property type="entry name" value="Nic_PRibTrfase-Fam"/>
</dbReference>
<dbReference type="InterPro" id="IPR036068">
    <property type="entry name" value="Nicotinate_pribotase-like_C"/>
</dbReference>
<dbReference type="NCBIfam" id="TIGR01514">
    <property type="entry name" value="NAPRTase"/>
    <property type="match status" value="1"/>
</dbReference>
<dbReference type="NCBIfam" id="NF003704">
    <property type="entry name" value="PRK05321.1"/>
    <property type="match status" value="1"/>
</dbReference>
<dbReference type="PANTHER" id="PTHR11098">
    <property type="entry name" value="NICOTINATE PHOSPHORIBOSYLTRANSFERASE"/>
    <property type="match status" value="1"/>
</dbReference>
<dbReference type="PANTHER" id="PTHR11098:SF1">
    <property type="entry name" value="NICOTINATE PHOSPHORIBOSYLTRANSFERASE"/>
    <property type="match status" value="1"/>
</dbReference>
<dbReference type="Pfam" id="PF04095">
    <property type="entry name" value="NAPRTase"/>
    <property type="match status" value="1"/>
</dbReference>
<dbReference type="Pfam" id="PF17767">
    <property type="entry name" value="NAPRTase_N"/>
    <property type="match status" value="1"/>
</dbReference>
<dbReference type="PIRSF" id="PIRSF000484">
    <property type="entry name" value="NAPRT"/>
    <property type="match status" value="1"/>
</dbReference>
<dbReference type="SUPFAM" id="SSF51690">
    <property type="entry name" value="Nicotinate/Quinolinate PRTase C-terminal domain-like"/>
    <property type="match status" value="1"/>
</dbReference>
<dbReference type="SUPFAM" id="SSF54675">
    <property type="entry name" value="Nicotinate/Quinolinate PRTase N-terminal domain-like"/>
    <property type="match status" value="1"/>
</dbReference>
<evidence type="ECO:0000255" key="1">
    <source>
        <dbReference type="HAMAP-Rule" id="MF_00570"/>
    </source>
</evidence>
<feature type="chain" id="PRO_1000025013" description="Nicotinate phosphoribosyltransferase">
    <location>
        <begin position="1"/>
        <end position="400"/>
    </location>
</feature>
<feature type="modified residue" description="Phosphohistidine; by autocatalysis" evidence="1">
    <location>
        <position position="220"/>
    </location>
</feature>
<protein>
    <recommendedName>
        <fullName evidence="1">Nicotinate phosphoribosyltransferase</fullName>
        <shortName evidence="1">NAPRTase</shortName>
        <ecNumber evidence="1">6.3.4.21</ecNumber>
    </recommendedName>
</protein>
<comment type="function">
    <text evidence="1">Catalyzes the synthesis of beta-nicotinate D-ribonucleotide from nicotinate and 5-phospho-D-ribose 1-phosphate at the expense of ATP.</text>
</comment>
<comment type="catalytic activity">
    <reaction evidence="1">
        <text>nicotinate + 5-phospho-alpha-D-ribose 1-diphosphate + ATP + H2O = nicotinate beta-D-ribonucleotide + ADP + phosphate + diphosphate</text>
        <dbReference type="Rhea" id="RHEA:36163"/>
        <dbReference type="ChEBI" id="CHEBI:15377"/>
        <dbReference type="ChEBI" id="CHEBI:30616"/>
        <dbReference type="ChEBI" id="CHEBI:32544"/>
        <dbReference type="ChEBI" id="CHEBI:33019"/>
        <dbReference type="ChEBI" id="CHEBI:43474"/>
        <dbReference type="ChEBI" id="CHEBI:57502"/>
        <dbReference type="ChEBI" id="CHEBI:58017"/>
        <dbReference type="ChEBI" id="CHEBI:456216"/>
        <dbReference type="EC" id="6.3.4.21"/>
    </reaction>
</comment>
<comment type="pathway">
    <text evidence="1">Cofactor biosynthesis; NAD(+) biosynthesis; nicotinate D-ribonucleotide from nicotinate: step 1/1.</text>
</comment>
<comment type="PTM">
    <text evidence="1">Transiently phosphorylated on a His residue during the reaction cycle. Phosphorylation strongly increases the affinity for substrates and increases the rate of nicotinate D-ribonucleotide production. Dephosphorylation regenerates the low-affinity form of the enzyme, leading to product release.</text>
</comment>
<comment type="similarity">
    <text evidence="1">Belongs to the NAPRTase family.</text>
</comment>
<organism>
    <name type="scientific">Shigella flexneri</name>
    <dbReference type="NCBI Taxonomy" id="623"/>
    <lineage>
        <taxon>Bacteria</taxon>
        <taxon>Pseudomonadati</taxon>
        <taxon>Pseudomonadota</taxon>
        <taxon>Gammaproteobacteria</taxon>
        <taxon>Enterobacterales</taxon>
        <taxon>Enterobacteriaceae</taxon>
        <taxon>Shigella</taxon>
    </lineage>
</organism>
<keyword id="KW-0436">Ligase</keyword>
<keyword id="KW-0597">Phosphoprotein</keyword>
<keyword id="KW-0662">Pyridine nucleotide biosynthesis</keyword>
<keyword id="KW-1185">Reference proteome</keyword>
<proteinExistence type="inferred from homology"/>
<sequence length="400" mass="45911">MTQFASPVLHSLLDTDAYKLHMQQAVFHHYYDVHVAAEFRCRGDDLLGIYADAIREQIQAMQHLRLQDDEYQWLSALPFFKADYLNWLREFRFNPEQVTVSNDNGKLDIRLSGPWREVILWEVPLLAVISEMVHRYRSPQADVAQALDTLESKLVDFSALTAGLDMSRFHLMDFGTRRRFSREVQETIVKRLQQESWFVGTSNYDLARRLSLTPMGTQAHEWFQAHQQISPDLANSQRAALAAWLEEYPDQLGIALTDCITMDAFLRDFGVEFASRYQGLRHDSGDPVEWGEKAIAHYEKLGIDPQSKTLVFSDNLDLRKAVELYRHFSSRVQLSFGIGTRLTCDIPQVKPLNIVIKLVECNGKPVAKLSDSPGKTICHDKAFVRALRKAFDLPHIKKAS</sequence>
<name>PNCB_SHIFL</name>
<gene>
    <name evidence="1" type="primary">pncB</name>
    <name type="ordered locus">SF0928</name>
    <name type="ordered locus">S0992</name>
</gene>
<reference key="1">
    <citation type="journal article" date="2002" name="Nucleic Acids Res.">
        <title>Genome sequence of Shigella flexneri 2a: insights into pathogenicity through comparison with genomes of Escherichia coli K12 and O157.</title>
        <authorList>
            <person name="Jin Q."/>
            <person name="Yuan Z."/>
            <person name="Xu J."/>
            <person name="Wang Y."/>
            <person name="Shen Y."/>
            <person name="Lu W."/>
            <person name="Wang J."/>
            <person name="Liu H."/>
            <person name="Yang J."/>
            <person name="Yang F."/>
            <person name="Zhang X."/>
            <person name="Zhang J."/>
            <person name="Yang G."/>
            <person name="Wu H."/>
            <person name="Qu D."/>
            <person name="Dong J."/>
            <person name="Sun L."/>
            <person name="Xue Y."/>
            <person name="Zhao A."/>
            <person name="Gao Y."/>
            <person name="Zhu J."/>
            <person name="Kan B."/>
            <person name="Ding K."/>
            <person name="Chen S."/>
            <person name="Cheng H."/>
            <person name="Yao Z."/>
            <person name="He B."/>
            <person name="Chen R."/>
            <person name="Ma D."/>
            <person name="Qiang B."/>
            <person name="Wen Y."/>
            <person name="Hou Y."/>
            <person name="Yu J."/>
        </authorList>
    </citation>
    <scope>NUCLEOTIDE SEQUENCE [LARGE SCALE GENOMIC DNA]</scope>
    <source>
        <strain>301 / Serotype 2a</strain>
    </source>
</reference>
<reference key="2">
    <citation type="journal article" date="2003" name="Infect. Immun.">
        <title>Complete genome sequence and comparative genomics of Shigella flexneri serotype 2a strain 2457T.</title>
        <authorList>
            <person name="Wei J."/>
            <person name="Goldberg M.B."/>
            <person name="Burland V."/>
            <person name="Venkatesan M.M."/>
            <person name="Deng W."/>
            <person name="Fournier G."/>
            <person name="Mayhew G.F."/>
            <person name="Plunkett G. III"/>
            <person name="Rose D.J."/>
            <person name="Darling A."/>
            <person name="Mau B."/>
            <person name="Perna N.T."/>
            <person name="Payne S.M."/>
            <person name="Runyen-Janecky L.J."/>
            <person name="Zhou S."/>
            <person name="Schwartz D.C."/>
            <person name="Blattner F.R."/>
        </authorList>
    </citation>
    <scope>NUCLEOTIDE SEQUENCE [LARGE SCALE GENOMIC DNA]</scope>
    <source>
        <strain>ATCC 700930 / 2457T / Serotype 2a</strain>
    </source>
</reference>
<accession>Q83LN3</accession>
<accession>Q7UD27</accession>